<reference evidence="8" key="1">
    <citation type="journal article" date="2010" name="J. Proteome Res.">
        <title>Extensive de novo sequencing of new parvalbumin isoforms using a novel combination of bottom-up proteomics, accurate molecular mass measurement by FTICR-MS, and selected MS/MS ion monitoring.</title>
        <authorList>
            <person name="Carrera M."/>
            <person name="Canas B."/>
            <person name="Vazquez J."/>
            <person name="Gallardo J.M."/>
        </authorList>
    </citation>
    <scope>PROTEIN SEQUENCE</scope>
    <scope>MASS SPECTROMETRY</scope>
    <scope>ACETYLATION AT ALA-1</scope>
    <source>
        <tissue evidence="6">Muscle</tissue>
    </source>
</reference>
<evidence type="ECO:0000250" key="1">
    <source>
        <dbReference type="UniProtKB" id="P02621"/>
    </source>
</evidence>
<evidence type="ECO:0000250" key="2">
    <source>
        <dbReference type="UniProtKB" id="P02622"/>
    </source>
</evidence>
<evidence type="ECO:0000250" key="3">
    <source>
        <dbReference type="UniProtKB" id="P02624"/>
    </source>
</evidence>
<evidence type="ECO:0000255" key="4"/>
<evidence type="ECO:0000255" key="5">
    <source>
        <dbReference type="PROSITE-ProRule" id="PRU00448"/>
    </source>
</evidence>
<evidence type="ECO:0000269" key="6">
    <source>
    </source>
</evidence>
<evidence type="ECO:0000303" key="7">
    <source>
    </source>
</evidence>
<evidence type="ECO:0000305" key="8"/>
<sequence>AFSGILAEADIAAALKACAAADTFNYKAFFAKVGLSAKSADDIKKAFFVIDQDKSGFIEEDELKLFLQVFSAGARALTDAETKAFLKAGDSDGDGAIGVDEFAVLVKA</sequence>
<proteinExistence type="evidence at protein level"/>
<accession>P86775</accession>
<protein>
    <recommendedName>
        <fullName evidence="7">Parvalbumin beta 2</fullName>
    </recommendedName>
</protein>
<keyword id="KW-0007">Acetylation</keyword>
<keyword id="KW-0020">Allergen</keyword>
<keyword id="KW-0106">Calcium</keyword>
<keyword id="KW-0903">Direct protein sequencing</keyword>
<keyword id="KW-0479">Metal-binding</keyword>
<keyword id="KW-0514">Muscle protein</keyword>
<keyword id="KW-0677">Repeat</keyword>
<comment type="function">
    <text evidence="2 3">In muscle, parvalbumin is thought to be involved in relaxation after contraction. It binds two calcium ions (By similarity).</text>
</comment>
<comment type="mass spectrometry"/>
<comment type="miscellaneous">
    <text evidence="2 6">Is regarded as an important allergen.</text>
</comment>
<comment type="miscellaneous">
    <text evidence="6">On the 2D-gel the determined pI of this protein is: 4.29, its MW is: 11.50 kDa.</text>
</comment>
<comment type="similarity">
    <text evidence="4">Belongs to the parvalbumin family.</text>
</comment>
<organism>
    <name type="scientific">Merluccius productus</name>
    <name type="common">North Pacific hake</name>
    <name type="synonym">Merlangus productus</name>
    <dbReference type="NCBI Taxonomy" id="89952"/>
    <lineage>
        <taxon>Eukaryota</taxon>
        <taxon>Metazoa</taxon>
        <taxon>Chordata</taxon>
        <taxon>Craniata</taxon>
        <taxon>Vertebrata</taxon>
        <taxon>Euteleostomi</taxon>
        <taxon>Actinopterygii</taxon>
        <taxon>Neopterygii</taxon>
        <taxon>Teleostei</taxon>
        <taxon>Neoteleostei</taxon>
        <taxon>Acanthomorphata</taxon>
        <taxon>Zeiogadaria</taxon>
        <taxon>Gadariae</taxon>
        <taxon>Gadiformes</taxon>
        <taxon>Gadoidei</taxon>
        <taxon>Merlucciidae</taxon>
        <taxon>Merluccius</taxon>
    </lineage>
</organism>
<name>PRVB2_MERPR</name>
<dbReference type="SMR" id="P86775"/>
<dbReference type="iPTMnet" id="P86775"/>
<dbReference type="GO" id="GO:0005737">
    <property type="term" value="C:cytoplasm"/>
    <property type="evidence" value="ECO:0007669"/>
    <property type="project" value="TreeGrafter"/>
</dbReference>
<dbReference type="GO" id="GO:0005509">
    <property type="term" value="F:calcium ion binding"/>
    <property type="evidence" value="ECO:0007669"/>
    <property type="project" value="InterPro"/>
</dbReference>
<dbReference type="CDD" id="cd16255">
    <property type="entry name" value="EFh_parvalbumin_beta"/>
    <property type="match status" value="1"/>
</dbReference>
<dbReference type="FunFam" id="1.10.238.10:FF:000060">
    <property type="entry name" value="Parvalbumin, thymic"/>
    <property type="match status" value="1"/>
</dbReference>
<dbReference type="Gene3D" id="1.10.238.10">
    <property type="entry name" value="EF-hand"/>
    <property type="match status" value="1"/>
</dbReference>
<dbReference type="InterPro" id="IPR011992">
    <property type="entry name" value="EF-hand-dom_pair"/>
</dbReference>
<dbReference type="InterPro" id="IPR018247">
    <property type="entry name" value="EF_Hand_1_Ca_BS"/>
</dbReference>
<dbReference type="InterPro" id="IPR002048">
    <property type="entry name" value="EF_hand_dom"/>
</dbReference>
<dbReference type="InterPro" id="IPR008080">
    <property type="entry name" value="Parvalbumin"/>
</dbReference>
<dbReference type="PANTHER" id="PTHR11653:SF12">
    <property type="entry name" value="PARVALBUMIN"/>
    <property type="match status" value="1"/>
</dbReference>
<dbReference type="PANTHER" id="PTHR11653">
    <property type="entry name" value="PARVALBUMIN ALPHA"/>
    <property type="match status" value="1"/>
</dbReference>
<dbReference type="Pfam" id="PF13499">
    <property type="entry name" value="EF-hand_7"/>
    <property type="match status" value="1"/>
</dbReference>
<dbReference type="PRINTS" id="PR01697">
    <property type="entry name" value="PARVALBUMIN"/>
</dbReference>
<dbReference type="SMART" id="SM00054">
    <property type="entry name" value="EFh"/>
    <property type="match status" value="2"/>
</dbReference>
<dbReference type="SUPFAM" id="SSF47473">
    <property type="entry name" value="EF-hand"/>
    <property type="match status" value="1"/>
</dbReference>
<dbReference type="PROSITE" id="PS00018">
    <property type="entry name" value="EF_HAND_1"/>
    <property type="match status" value="2"/>
</dbReference>
<dbReference type="PROSITE" id="PS50222">
    <property type="entry name" value="EF_HAND_2"/>
    <property type="match status" value="2"/>
</dbReference>
<feature type="chain" id="PRO_0000399435" description="Parvalbumin beta 2">
    <location>
        <begin position="1"/>
        <end position="108"/>
    </location>
</feature>
<feature type="domain" description="EF-hand 1" evidence="5">
    <location>
        <begin position="38"/>
        <end position="73"/>
    </location>
</feature>
<feature type="domain" description="EF-hand 2" evidence="5">
    <location>
        <begin position="77"/>
        <end position="108"/>
    </location>
</feature>
<feature type="binding site" evidence="1 5">
    <location>
        <position position="51"/>
    </location>
    <ligand>
        <name>Ca(2+)</name>
        <dbReference type="ChEBI" id="CHEBI:29108"/>
        <label>1</label>
    </ligand>
</feature>
<feature type="binding site" evidence="1 5">
    <location>
        <position position="53"/>
    </location>
    <ligand>
        <name>Ca(2+)</name>
        <dbReference type="ChEBI" id="CHEBI:29108"/>
        <label>1</label>
    </ligand>
</feature>
<feature type="binding site" evidence="1 5">
    <location>
        <position position="55"/>
    </location>
    <ligand>
        <name>Ca(2+)</name>
        <dbReference type="ChEBI" id="CHEBI:29108"/>
        <label>1</label>
    </ligand>
</feature>
<feature type="binding site" evidence="1">
    <location>
        <position position="57"/>
    </location>
    <ligand>
        <name>Ca(2+)</name>
        <dbReference type="ChEBI" id="CHEBI:29108"/>
        <label>1</label>
    </ligand>
</feature>
<feature type="binding site" evidence="1">
    <location>
        <position position="59"/>
    </location>
    <ligand>
        <name>Ca(2+)</name>
        <dbReference type="ChEBI" id="CHEBI:29108"/>
        <label>1</label>
    </ligand>
</feature>
<feature type="binding site" evidence="1 5">
    <location>
        <position position="62"/>
    </location>
    <ligand>
        <name>Ca(2+)</name>
        <dbReference type="ChEBI" id="CHEBI:29108"/>
        <label>1</label>
    </ligand>
</feature>
<feature type="binding site" evidence="1 5">
    <location>
        <position position="90"/>
    </location>
    <ligand>
        <name>Ca(2+)</name>
        <dbReference type="ChEBI" id="CHEBI:29108"/>
        <label>2</label>
    </ligand>
</feature>
<feature type="binding site" evidence="1 5">
    <location>
        <position position="92"/>
    </location>
    <ligand>
        <name>Ca(2+)</name>
        <dbReference type="ChEBI" id="CHEBI:29108"/>
        <label>2</label>
    </ligand>
</feature>
<feature type="binding site" evidence="1 5">
    <location>
        <position position="94"/>
    </location>
    <ligand>
        <name>Ca(2+)</name>
        <dbReference type="ChEBI" id="CHEBI:29108"/>
        <label>2</label>
    </ligand>
</feature>
<feature type="binding site" evidence="1">
    <location>
        <position position="96"/>
    </location>
    <ligand>
        <name>Ca(2+)</name>
        <dbReference type="ChEBI" id="CHEBI:29108"/>
        <label>2</label>
    </ligand>
</feature>
<feature type="binding site" evidence="1 5">
    <location>
        <position position="101"/>
    </location>
    <ligand>
        <name>Ca(2+)</name>
        <dbReference type="ChEBI" id="CHEBI:29108"/>
        <label>2</label>
    </ligand>
</feature>
<feature type="modified residue" description="N-acetylalanine" evidence="6">
    <location>
        <position position="1"/>
    </location>
</feature>
<feature type="unsure residue" description="I or L" evidence="6">
    <location>
        <position position="5"/>
    </location>
</feature>
<feature type="unsure residue" description="L or I" evidence="6">
    <location>
        <position position="6"/>
    </location>
</feature>
<feature type="unsure residue" description="I or L" evidence="6">
    <location>
        <position position="11"/>
    </location>
</feature>
<feature type="unsure residue" description="L or I" evidence="6">
    <location>
        <position position="15"/>
    </location>
</feature>
<feature type="unsure residue" description="K or Q" evidence="6">
    <location>
        <position position="16"/>
    </location>
</feature>
<feature type="unsure residue" description="K or Q" evidence="6">
    <location>
        <position position="27"/>
    </location>
</feature>
<feature type="unsure residue" description="K or Q" evidence="6">
    <location>
        <position position="32"/>
    </location>
</feature>
<feature type="unsure residue" description="L or I" evidence="6">
    <location>
        <position position="35"/>
    </location>
</feature>
<feature type="unsure residue" description="K or Q" evidence="6">
    <location>
        <position position="38"/>
    </location>
</feature>
<feature type="unsure residue" description="I or L" evidence="6">
    <location>
        <position position="43"/>
    </location>
</feature>
<feature type="unsure residue" description="K or Q" evidence="6">
    <location>
        <position position="44"/>
    </location>
</feature>
<feature type="unsure residue" description="K or Q" evidence="6">
    <location>
        <position position="45"/>
    </location>
</feature>
<feature type="unsure residue" description="I or L" evidence="6">
    <location>
        <position position="50"/>
    </location>
</feature>
<feature type="unsure residue" description="Q or K" evidence="6">
    <location>
        <position position="52"/>
    </location>
</feature>
<feature type="unsure residue" description="K or Q" evidence="6">
    <location>
        <position position="54"/>
    </location>
</feature>
<feature type="unsure residue" description="I or L" evidence="6">
    <location>
        <position position="58"/>
    </location>
</feature>
<feature type="unsure residue" description="L or I" evidence="6">
    <location>
        <position position="63"/>
    </location>
</feature>
<feature type="unsure residue" description="K or Q" evidence="6">
    <location>
        <position position="64"/>
    </location>
</feature>
<feature type="unsure residue" description="L or I" evidence="6">
    <location>
        <position position="65"/>
    </location>
</feature>
<feature type="unsure residue" description="L or I" evidence="6">
    <location>
        <position position="67"/>
    </location>
</feature>
<feature type="unsure residue" description="Q or K" evidence="6">
    <location>
        <position position="68"/>
    </location>
</feature>
<feature type="unsure residue" description="L or I" evidence="6">
    <location>
        <position position="77"/>
    </location>
</feature>
<feature type="unsure residue" description="K or Q" evidence="6">
    <location>
        <position position="83"/>
    </location>
</feature>
<feature type="unsure residue" description="L or I" evidence="6">
    <location>
        <position position="86"/>
    </location>
</feature>
<feature type="unsure residue" description="K or Q" evidence="6">
    <location>
        <position position="87"/>
    </location>
</feature>
<feature type="unsure residue" description="I or L" evidence="6">
    <location>
        <position position="97"/>
    </location>
</feature>
<feature type="unsure residue" description="L or I" evidence="6">
    <location>
        <position position="105"/>
    </location>
</feature>
<feature type="unsure residue" description="K or Q" evidence="6">
    <location>
        <position position="107"/>
    </location>
</feature>